<reference key="1">
    <citation type="journal article" date="2006" name="Genome Res.">
        <title>Skewed genomic variability in strains of the toxigenic bacterial pathogen, Clostridium perfringens.</title>
        <authorList>
            <person name="Myers G.S.A."/>
            <person name="Rasko D.A."/>
            <person name="Cheung J.K."/>
            <person name="Ravel J."/>
            <person name="Seshadri R."/>
            <person name="DeBoy R.T."/>
            <person name="Ren Q."/>
            <person name="Varga J."/>
            <person name="Awad M.M."/>
            <person name="Brinkac L.M."/>
            <person name="Daugherty S.C."/>
            <person name="Haft D.H."/>
            <person name="Dodson R.J."/>
            <person name="Madupu R."/>
            <person name="Nelson W.C."/>
            <person name="Rosovitz M.J."/>
            <person name="Sullivan S.A."/>
            <person name="Khouri H."/>
            <person name="Dimitrov G.I."/>
            <person name="Watkins K.L."/>
            <person name="Mulligan S."/>
            <person name="Benton J."/>
            <person name="Radune D."/>
            <person name="Fisher D.J."/>
            <person name="Atkins H.S."/>
            <person name="Hiscox T."/>
            <person name="Jost B.H."/>
            <person name="Billington S.J."/>
            <person name="Songer J.G."/>
            <person name="McClane B.A."/>
            <person name="Titball R.W."/>
            <person name="Rood J.I."/>
            <person name="Melville S.B."/>
            <person name="Paulsen I.T."/>
        </authorList>
    </citation>
    <scope>NUCLEOTIDE SEQUENCE [LARGE SCALE GENOMIC DNA]</scope>
    <source>
        <strain>SM101 / Type A</strain>
    </source>
</reference>
<accession>Q0SS87</accession>
<name>RL28_CLOPS</name>
<keyword id="KW-0687">Ribonucleoprotein</keyword>
<keyword id="KW-0689">Ribosomal protein</keyword>
<protein>
    <recommendedName>
        <fullName evidence="1">Large ribosomal subunit protein bL28</fullName>
    </recommendedName>
    <alternativeName>
        <fullName evidence="2">50S ribosomal protein L28</fullName>
    </alternativeName>
</protein>
<evidence type="ECO:0000255" key="1">
    <source>
        <dbReference type="HAMAP-Rule" id="MF_00373"/>
    </source>
</evidence>
<evidence type="ECO:0000305" key="2"/>
<gene>
    <name evidence="1" type="primary">rpmB</name>
    <name type="ordered locus">CPR_1705</name>
</gene>
<proteinExistence type="inferred from homology"/>
<sequence length="63" mass="7044">MARKCEICNKGVVAGVQYSHSHRQSKRTWAPNIKKVKAIVKGTPKTVHVCTRCLRSGKVQRAI</sequence>
<feature type="chain" id="PRO_1000007217" description="Large ribosomal subunit protein bL28">
    <location>
        <begin position="1"/>
        <end position="63"/>
    </location>
</feature>
<comment type="similarity">
    <text evidence="1">Belongs to the bacterial ribosomal protein bL28 family.</text>
</comment>
<organism>
    <name type="scientific">Clostridium perfringens (strain SM101 / Type A)</name>
    <dbReference type="NCBI Taxonomy" id="289380"/>
    <lineage>
        <taxon>Bacteria</taxon>
        <taxon>Bacillati</taxon>
        <taxon>Bacillota</taxon>
        <taxon>Clostridia</taxon>
        <taxon>Eubacteriales</taxon>
        <taxon>Clostridiaceae</taxon>
        <taxon>Clostridium</taxon>
    </lineage>
</organism>
<dbReference type="EMBL" id="CP000312">
    <property type="protein sequence ID" value="ABG86083.1"/>
    <property type="molecule type" value="Genomic_DNA"/>
</dbReference>
<dbReference type="RefSeq" id="WP_011592622.1">
    <property type="nucleotide sequence ID" value="NC_008262.1"/>
</dbReference>
<dbReference type="SMR" id="Q0SS87"/>
<dbReference type="KEGG" id="cpr:CPR_1705"/>
<dbReference type="Proteomes" id="UP000001824">
    <property type="component" value="Chromosome"/>
</dbReference>
<dbReference type="GO" id="GO:1990904">
    <property type="term" value="C:ribonucleoprotein complex"/>
    <property type="evidence" value="ECO:0007669"/>
    <property type="project" value="UniProtKB-KW"/>
</dbReference>
<dbReference type="GO" id="GO:0005840">
    <property type="term" value="C:ribosome"/>
    <property type="evidence" value="ECO:0007669"/>
    <property type="project" value="UniProtKB-KW"/>
</dbReference>
<dbReference type="GO" id="GO:0003735">
    <property type="term" value="F:structural constituent of ribosome"/>
    <property type="evidence" value="ECO:0007669"/>
    <property type="project" value="InterPro"/>
</dbReference>
<dbReference type="GO" id="GO:0006412">
    <property type="term" value="P:translation"/>
    <property type="evidence" value="ECO:0007669"/>
    <property type="project" value="UniProtKB-UniRule"/>
</dbReference>
<dbReference type="Gene3D" id="2.30.170.40">
    <property type="entry name" value="Ribosomal protein L28/L24"/>
    <property type="match status" value="1"/>
</dbReference>
<dbReference type="HAMAP" id="MF_00373">
    <property type="entry name" value="Ribosomal_bL28"/>
    <property type="match status" value="1"/>
</dbReference>
<dbReference type="InterPro" id="IPR050096">
    <property type="entry name" value="Bacterial_rp_bL28"/>
</dbReference>
<dbReference type="InterPro" id="IPR026569">
    <property type="entry name" value="Ribosomal_bL28"/>
</dbReference>
<dbReference type="InterPro" id="IPR034704">
    <property type="entry name" value="Ribosomal_bL28/bL31-like_sf"/>
</dbReference>
<dbReference type="InterPro" id="IPR001383">
    <property type="entry name" value="Ribosomal_bL28_bact-type"/>
</dbReference>
<dbReference type="InterPro" id="IPR037147">
    <property type="entry name" value="Ribosomal_bL28_sf"/>
</dbReference>
<dbReference type="NCBIfam" id="TIGR00009">
    <property type="entry name" value="L28"/>
    <property type="match status" value="1"/>
</dbReference>
<dbReference type="PANTHER" id="PTHR39080">
    <property type="entry name" value="50S RIBOSOMAL PROTEIN L28"/>
    <property type="match status" value="1"/>
</dbReference>
<dbReference type="PANTHER" id="PTHR39080:SF1">
    <property type="entry name" value="LARGE RIBOSOMAL SUBUNIT PROTEIN BL28A"/>
    <property type="match status" value="1"/>
</dbReference>
<dbReference type="Pfam" id="PF00830">
    <property type="entry name" value="Ribosomal_L28"/>
    <property type="match status" value="1"/>
</dbReference>
<dbReference type="SUPFAM" id="SSF143800">
    <property type="entry name" value="L28p-like"/>
    <property type="match status" value="1"/>
</dbReference>